<proteinExistence type="evidence at protein level"/>
<accession>A0A8I3MKU8</accession>
<gene>
    <name evidence="4" type="primary">TMEM147</name>
</gene>
<name>TM147_CANLF</name>
<sequence>MTLFHFGNCFALAYFPYFITYKCSGLSEYNAFWKCVQAGVTYLFVQLCKMLFLATFFPTWEGGIYDFIGEFMKASVDVADLIGLNLVMSRNAGKGEYKIMVAALGWATAELIMSRCIPLWVGARGIEFDWKYIQMSIDSNISLVHYIVASAQVWMITRYDLYHTFRPAVLLLMFLSVYKAFVMETFVHLCSLGSWTALLARAVVTGLLALSTLALYVAVVNVHS</sequence>
<dbReference type="RefSeq" id="XP_038381607.1">
    <property type="nucleotide sequence ID" value="XM_038525679.1"/>
</dbReference>
<dbReference type="RefSeq" id="XP_038513372.1">
    <property type="nucleotide sequence ID" value="XM_038657444.1"/>
</dbReference>
<dbReference type="RefSeq" id="XP_533692.1">
    <property type="nucleotide sequence ID" value="XM_533692.7"/>
</dbReference>
<dbReference type="PDB" id="7TM3">
    <property type="method" value="EM"/>
    <property type="resolution" value="3.88 A"/>
    <property type="chains" value="6=1-224"/>
</dbReference>
<dbReference type="PDB" id="7TUT">
    <property type="method" value="EM"/>
    <property type="resolution" value="3.88 A"/>
    <property type="chains" value="6=1-224"/>
</dbReference>
<dbReference type="PDBsum" id="7TM3"/>
<dbReference type="PDBsum" id="7TUT"/>
<dbReference type="SMR" id="A0A8I3MKU8"/>
<dbReference type="FunCoup" id="A0A8I3MKU8">
    <property type="interactions" value="2070"/>
</dbReference>
<dbReference type="Ensembl" id="ENSCAFT00030009720.1">
    <property type="protein sequence ID" value="ENSCAFP00030008501.1"/>
    <property type="gene ID" value="ENSCAFG00030005302.1"/>
</dbReference>
<dbReference type="Ensembl" id="ENSCAFT00040001168.1">
    <property type="protein sequence ID" value="ENSCAFP00040000990.1"/>
    <property type="gene ID" value="ENSCAFG00040000656.1"/>
</dbReference>
<dbReference type="Ensembl" id="ENSCAFT00845004203.1">
    <property type="protein sequence ID" value="ENSCAFP00845003360.1"/>
    <property type="gene ID" value="ENSCAFG00845002384.1"/>
</dbReference>
<dbReference type="GeneID" id="476482"/>
<dbReference type="KEGG" id="cfa:476482"/>
<dbReference type="CTD" id="10430"/>
<dbReference type="GeneTree" id="ENSGT00390000013276"/>
<dbReference type="OMA" id="SKCVYAG"/>
<dbReference type="OrthoDB" id="9993532at2759"/>
<dbReference type="Proteomes" id="UP000002254">
    <property type="component" value="Unplaced"/>
</dbReference>
<dbReference type="Proteomes" id="UP000694429">
    <property type="component" value="Chromosome 1"/>
</dbReference>
<dbReference type="Proteomes" id="UP000694542">
    <property type="component" value="Chromosome 1"/>
</dbReference>
<dbReference type="Proteomes" id="UP000805418">
    <property type="component" value="Chromosome 1"/>
</dbReference>
<dbReference type="GO" id="GO:0005789">
    <property type="term" value="C:endoplasmic reticulum membrane"/>
    <property type="evidence" value="ECO:0000314"/>
    <property type="project" value="UniProtKB"/>
</dbReference>
<dbReference type="GO" id="GO:0160064">
    <property type="term" value="C:multi-pass translocon complex"/>
    <property type="evidence" value="ECO:0000314"/>
    <property type="project" value="UniProtKB"/>
</dbReference>
<dbReference type="GO" id="GO:0031965">
    <property type="term" value="C:nuclear membrane"/>
    <property type="evidence" value="ECO:0007669"/>
    <property type="project" value="UniProtKB-SubCell"/>
</dbReference>
<dbReference type="GO" id="GO:0005886">
    <property type="term" value="C:plasma membrane"/>
    <property type="evidence" value="ECO:0007669"/>
    <property type="project" value="UniProtKB-SubCell"/>
</dbReference>
<dbReference type="GO" id="GO:0043022">
    <property type="term" value="F:ribosome binding"/>
    <property type="evidence" value="ECO:0007669"/>
    <property type="project" value="Ensembl"/>
</dbReference>
<dbReference type="GO" id="GO:0160063">
    <property type="term" value="P:multi-pass transmembrane protein insertion into ER membrane"/>
    <property type="evidence" value="ECO:0000314"/>
    <property type="project" value="UniProtKB"/>
</dbReference>
<dbReference type="GO" id="GO:0036228">
    <property type="term" value="P:protein localization to nuclear inner membrane"/>
    <property type="evidence" value="ECO:0007669"/>
    <property type="project" value="Ensembl"/>
</dbReference>
<dbReference type="InterPro" id="IPR019164">
    <property type="entry name" value="TMEM147"/>
</dbReference>
<dbReference type="PANTHER" id="PTHR12869:SF0">
    <property type="entry name" value="BOS COMPLEX SUBUNIT TMEM147"/>
    <property type="match status" value="1"/>
</dbReference>
<dbReference type="PANTHER" id="PTHR12869">
    <property type="entry name" value="SMALL SEVEN TRANSMEMBRANE DOMAIN-CONTAINING PROTEIN"/>
    <property type="match status" value="1"/>
</dbReference>
<dbReference type="Pfam" id="PF09767">
    <property type="entry name" value="DUF2053"/>
    <property type="match status" value="1"/>
</dbReference>
<evidence type="ECO:0000250" key="1">
    <source>
        <dbReference type="UniProtKB" id="I6VSD2"/>
    </source>
</evidence>
<evidence type="ECO:0000250" key="2">
    <source>
        <dbReference type="UniProtKB" id="Q9BVK8"/>
    </source>
</evidence>
<evidence type="ECO:0000269" key="3">
    <source>
    </source>
</evidence>
<evidence type="ECO:0000303" key="4">
    <source>
    </source>
</evidence>
<evidence type="ECO:0000305" key="5"/>
<evidence type="ECO:0000305" key="6">
    <source>
    </source>
</evidence>
<evidence type="ECO:0007744" key="7">
    <source>
        <dbReference type="PDB" id="7TM3"/>
    </source>
</evidence>
<evidence type="ECO:0007744" key="8">
    <source>
        <dbReference type="PDB" id="7TUT"/>
    </source>
</evidence>
<feature type="chain" id="PRO_0000457553" description="BOS complex subunit TMEM147">
    <location>
        <begin position="1"/>
        <end position="224"/>
    </location>
</feature>
<feature type="transmembrane region" description="Helical" evidence="6 7 8">
    <location>
        <begin position="1"/>
        <end position="21"/>
    </location>
</feature>
<feature type="topological domain" description="Cytoplasmic" evidence="6 7 8">
    <location>
        <begin position="22"/>
        <end position="34"/>
    </location>
</feature>
<feature type="transmembrane region" description="Helical" evidence="6 7 8">
    <location>
        <begin position="35"/>
        <end position="58"/>
    </location>
</feature>
<feature type="topological domain" description="Lumenal" evidence="6 7 8">
    <location>
        <begin position="59"/>
        <end position="66"/>
    </location>
</feature>
<feature type="transmembrane region" description="Helical" evidence="6 7 8">
    <location>
        <begin position="67"/>
        <end position="88"/>
    </location>
</feature>
<feature type="topological domain" description="Cytoplasmic" evidence="6 7 8">
    <location>
        <begin position="89"/>
        <end position="98"/>
    </location>
</feature>
<feature type="transmembrane region" description="Helical" evidence="6 7 8">
    <location>
        <begin position="99"/>
        <end position="124"/>
    </location>
</feature>
<feature type="topological domain" description="Lumenal" evidence="6 7 8">
    <location>
        <begin position="125"/>
        <end position="129"/>
    </location>
</feature>
<feature type="transmembrane region" description="Helical" evidence="6 7 8">
    <location>
        <begin position="130"/>
        <end position="155"/>
    </location>
</feature>
<feature type="topological domain" description="Cytoplasmic" evidence="6 7 8">
    <location>
        <begin position="156"/>
        <end position="164"/>
    </location>
</feature>
<feature type="transmembrane region" description="Helical" evidence="6 7 8">
    <location>
        <begin position="165"/>
        <end position="187"/>
    </location>
</feature>
<feature type="topological domain" description="Lumenal" evidence="6 7 8">
    <location>
        <begin position="188"/>
        <end position="194"/>
    </location>
</feature>
<feature type="transmembrane region" description="Helical" evidence="6 7 8">
    <location>
        <begin position="195"/>
        <end position="216"/>
    </location>
</feature>
<feature type="topological domain" description="Cytoplasmic" evidence="6 7 8">
    <location>
        <begin position="217"/>
        <end position="224"/>
    </location>
</feature>
<protein>
    <recommendedName>
        <fullName evidence="5">BOS complex subunit TMEM147</fullName>
    </recommendedName>
    <alternativeName>
        <fullName evidence="5">Transmembrane protein 147</fullName>
    </alternativeName>
</protein>
<comment type="function">
    <text evidence="2 3">Component of the multi-pass translocon (MPT) complex that mediates insertion of multi-pass membrane proteins into the lipid bilayer of membranes (PubMed:36261528). The MPT complex takes over after the SEC61 complex: following membrane insertion of the first few transmembrane segments of proteins by the SEC61 complex, the MPT complex occludes the lateral gate of the SEC61 complex to promote insertion of subsequent transmembrane regions (PubMed:36261528). Also acts as a negative regulator of CHRM3 function, most likely by interfering with its trafficking to the cell membrane (By similarity). Negatively regulates CHRM3-mediated calcium mobilization and activation of RPS6KA1/p90RSK activity (By similarity). Regulates LBR localization to the nucleus inner membrane (By similarity).</text>
</comment>
<comment type="subunit">
    <text evidence="2 3">Component of the back of Sec61 (BOS) complex, composed of NCLN/Nicalin, NOMO1 and TMEM147 (PubMed:36261528). The BOS complex is part of the multi-pass translocon (MPT) complex, composed of three subcomplexes, the GEL complex (composed of RAB5IF/OPTI and TMCO1), the BOS complex (composed of NCLN/Nicalin, NOMO1 and TMEM147) and the PAT complex (composed of WDR83OS/Asterix and CCDC47) (PubMed:36261528). The MPT complex associates with the SEC61 complex (PubMed:36261528). Interacts with CHRM3, CHRM1 and AVPR2 (By similarity). Interacts with LBR; promoting LBR localization to the nucleus inner membrane (By similarity). Interacts with DHCR7 (By similarity).</text>
</comment>
<comment type="subcellular location">
    <subcellularLocation>
        <location evidence="3">Endoplasmic reticulum membrane</location>
        <topology evidence="3">Multi-pass membrane protein</topology>
    </subcellularLocation>
    <subcellularLocation>
        <location evidence="2">Nucleus membrane</location>
        <topology evidence="3">Multi-pass membrane protein</topology>
    </subcellularLocation>
    <subcellularLocation>
        <location evidence="1">Cell membrane</location>
        <topology evidence="3">Multi-pass membrane protein</topology>
    </subcellularLocation>
</comment>
<comment type="similarity">
    <text evidence="5">Belongs to the TMEM147 family.</text>
</comment>
<organism>
    <name type="scientific">Canis lupus familiaris</name>
    <name type="common">Dog</name>
    <name type="synonym">Canis familiaris</name>
    <dbReference type="NCBI Taxonomy" id="9615"/>
    <lineage>
        <taxon>Eukaryota</taxon>
        <taxon>Metazoa</taxon>
        <taxon>Chordata</taxon>
        <taxon>Craniata</taxon>
        <taxon>Vertebrata</taxon>
        <taxon>Euteleostomi</taxon>
        <taxon>Mammalia</taxon>
        <taxon>Eutheria</taxon>
        <taxon>Laurasiatheria</taxon>
        <taxon>Carnivora</taxon>
        <taxon>Caniformia</taxon>
        <taxon>Canidae</taxon>
        <taxon>Canis</taxon>
    </lineage>
</organism>
<reference key="1">
    <citation type="journal article" date="2005" name="Nature">
        <title>Genome sequence, comparative analysis and haplotype structure of the domestic dog.</title>
        <authorList>
            <person name="Lindblad-Toh K."/>
            <person name="Wade C.M."/>
            <person name="Mikkelsen T.S."/>
            <person name="Karlsson E.K."/>
            <person name="Jaffe D.B."/>
            <person name="Kamal M."/>
            <person name="Clamp M."/>
            <person name="Chang J.L."/>
            <person name="Kulbokas E.J. III"/>
            <person name="Zody M.C."/>
            <person name="Mauceli E."/>
            <person name="Xie X."/>
            <person name="Breen M."/>
            <person name="Wayne R.K."/>
            <person name="Ostrander E.A."/>
            <person name="Ponting C.P."/>
            <person name="Galibert F."/>
            <person name="Smith D.R."/>
            <person name="deJong P.J."/>
            <person name="Kirkness E.F."/>
            <person name="Alvarez P."/>
            <person name="Biagi T."/>
            <person name="Brockman W."/>
            <person name="Butler J."/>
            <person name="Chin C.-W."/>
            <person name="Cook A."/>
            <person name="Cuff J."/>
            <person name="Daly M.J."/>
            <person name="DeCaprio D."/>
            <person name="Gnerre S."/>
            <person name="Grabherr M."/>
            <person name="Kellis M."/>
            <person name="Kleber M."/>
            <person name="Bardeleben C."/>
            <person name="Goodstadt L."/>
            <person name="Heger A."/>
            <person name="Hitte C."/>
            <person name="Kim L."/>
            <person name="Koepfli K.-P."/>
            <person name="Parker H.G."/>
            <person name="Pollinger J.P."/>
            <person name="Searle S.M.J."/>
            <person name="Sutter N.B."/>
            <person name="Thomas R."/>
            <person name="Webber C."/>
            <person name="Baldwin J."/>
            <person name="Abebe A."/>
            <person name="Abouelleil A."/>
            <person name="Aftuck L."/>
            <person name="Ait-Zahra M."/>
            <person name="Aldredge T."/>
            <person name="Allen N."/>
            <person name="An P."/>
            <person name="Anderson S."/>
            <person name="Antoine C."/>
            <person name="Arachchi H."/>
            <person name="Aslam A."/>
            <person name="Ayotte L."/>
            <person name="Bachantsang P."/>
            <person name="Barry A."/>
            <person name="Bayul T."/>
            <person name="Benamara M."/>
            <person name="Berlin A."/>
            <person name="Bessette D."/>
            <person name="Blitshteyn B."/>
            <person name="Bloom T."/>
            <person name="Blye J."/>
            <person name="Boguslavskiy L."/>
            <person name="Bonnet C."/>
            <person name="Boukhgalter B."/>
            <person name="Brown A."/>
            <person name="Cahill P."/>
            <person name="Calixte N."/>
            <person name="Camarata J."/>
            <person name="Cheshatsang Y."/>
            <person name="Chu J."/>
            <person name="Citroen M."/>
            <person name="Collymore A."/>
            <person name="Cooke P."/>
            <person name="Dawoe T."/>
            <person name="Daza R."/>
            <person name="Decktor K."/>
            <person name="DeGray S."/>
            <person name="Dhargay N."/>
            <person name="Dooley K."/>
            <person name="Dooley K."/>
            <person name="Dorje P."/>
            <person name="Dorjee K."/>
            <person name="Dorris L."/>
            <person name="Duffey N."/>
            <person name="Dupes A."/>
            <person name="Egbiremolen O."/>
            <person name="Elong R."/>
            <person name="Falk J."/>
            <person name="Farina A."/>
            <person name="Faro S."/>
            <person name="Ferguson D."/>
            <person name="Ferreira P."/>
            <person name="Fisher S."/>
            <person name="FitzGerald M."/>
            <person name="Foley K."/>
            <person name="Foley C."/>
            <person name="Franke A."/>
            <person name="Friedrich D."/>
            <person name="Gage D."/>
            <person name="Garber M."/>
            <person name="Gearin G."/>
            <person name="Giannoukos G."/>
            <person name="Goode T."/>
            <person name="Goyette A."/>
            <person name="Graham J."/>
            <person name="Grandbois E."/>
            <person name="Gyaltsen K."/>
            <person name="Hafez N."/>
            <person name="Hagopian D."/>
            <person name="Hagos B."/>
            <person name="Hall J."/>
            <person name="Healy C."/>
            <person name="Hegarty R."/>
            <person name="Honan T."/>
            <person name="Horn A."/>
            <person name="Houde N."/>
            <person name="Hughes L."/>
            <person name="Hunnicutt L."/>
            <person name="Husby M."/>
            <person name="Jester B."/>
            <person name="Jones C."/>
            <person name="Kamat A."/>
            <person name="Kanga B."/>
            <person name="Kells C."/>
            <person name="Khazanovich D."/>
            <person name="Kieu A.C."/>
            <person name="Kisner P."/>
            <person name="Kumar M."/>
            <person name="Lance K."/>
            <person name="Landers T."/>
            <person name="Lara M."/>
            <person name="Lee W."/>
            <person name="Leger J.-P."/>
            <person name="Lennon N."/>
            <person name="Leuper L."/>
            <person name="LeVine S."/>
            <person name="Liu J."/>
            <person name="Liu X."/>
            <person name="Lokyitsang Y."/>
            <person name="Lokyitsang T."/>
            <person name="Lui A."/>
            <person name="Macdonald J."/>
            <person name="Major J."/>
            <person name="Marabella R."/>
            <person name="Maru K."/>
            <person name="Matthews C."/>
            <person name="McDonough S."/>
            <person name="Mehta T."/>
            <person name="Meldrim J."/>
            <person name="Melnikov A."/>
            <person name="Meneus L."/>
            <person name="Mihalev A."/>
            <person name="Mihova T."/>
            <person name="Miller K."/>
            <person name="Mittelman R."/>
            <person name="Mlenga V."/>
            <person name="Mulrain L."/>
            <person name="Munson G."/>
            <person name="Navidi A."/>
            <person name="Naylor J."/>
            <person name="Nguyen T."/>
            <person name="Nguyen N."/>
            <person name="Nguyen C."/>
            <person name="Nguyen T."/>
            <person name="Nicol R."/>
            <person name="Norbu N."/>
            <person name="Norbu C."/>
            <person name="Novod N."/>
            <person name="Nyima T."/>
            <person name="Olandt P."/>
            <person name="O'Neill B."/>
            <person name="O'Neill K."/>
            <person name="Osman S."/>
            <person name="Oyono L."/>
            <person name="Patti C."/>
            <person name="Perrin D."/>
            <person name="Phunkhang P."/>
            <person name="Pierre F."/>
            <person name="Priest M."/>
            <person name="Rachupka A."/>
            <person name="Raghuraman S."/>
            <person name="Rameau R."/>
            <person name="Ray V."/>
            <person name="Raymond C."/>
            <person name="Rege F."/>
            <person name="Rise C."/>
            <person name="Rogers J."/>
            <person name="Rogov P."/>
            <person name="Sahalie J."/>
            <person name="Settipalli S."/>
            <person name="Sharpe T."/>
            <person name="Shea T."/>
            <person name="Sheehan M."/>
            <person name="Sherpa N."/>
            <person name="Shi J."/>
            <person name="Shih D."/>
            <person name="Sloan J."/>
            <person name="Smith C."/>
            <person name="Sparrow T."/>
            <person name="Stalker J."/>
            <person name="Stange-Thomann N."/>
            <person name="Stavropoulos S."/>
            <person name="Stone C."/>
            <person name="Stone S."/>
            <person name="Sykes S."/>
            <person name="Tchuinga P."/>
            <person name="Tenzing P."/>
            <person name="Tesfaye S."/>
            <person name="Thoulutsang D."/>
            <person name="Thoulutsang Y."/>
            <person name="Topham K."/>
            <person name="Topping I."/>
            <person name="Tsamla T."/>
            <person name="Vassiliev H."/>
            <person name="Venkataraman V."/>
            <person name="Vo A."/>
            <person name="Wangchuk T."/>
            <person name="Wangdi T."/>
            <person name="Weiand M."/>
            <person name="Wilkinson J."/>
            <person name="Wilson A."/>
            <person name="Yadav S."/>
            <person name="Yang S."/>
            <person name="Yang X."/>
            <person name="Young G."/>
            <person name="Yu Q."/>
            <person name="Zainoun J."/>
            <person name="Zembek L."/>
            <person name="Zimmer A."/>
            <person name="Lander E.S."/>
        </authorList>
    </citation>
    <scope>NUCLEOTIDE SEQUENCE [LARGE SCALE GENOMIC DNA]</scope>
    <source>
        <strain>Boxer</strain>
    </source>
</reference>
<reference evidence="7 8" key="2">
    <citation type="journal article" date="2022" name="Nature">
        <title>Mechanism of an intramembrane chaperone for multipass membrane proteins.</title>
        <authorList>
            <person name="Smalinskaite L."/>
            <person name="Kim M.K."/>
            <person name="Lewis A.J.O."/>
            <person name="Keenan R.J."/>
            <person name="Hegde R.S."/>
        </authorList>
    </citation>
    <scope>STRUCTURE BY ELECTRON MICROSCOPY (3.88 ANGSTROMS) IN COMPLEX WITH THE MULTI-PASS TRANSLOCON COMPLEX</scope>
    <scope>FUNCTION</scope>
    <scope>IDENTIFICATION IN THE MULTI-PASS TRANSLOCON COMPLEX</scope>
    <scope>SUBCELLULAR LOCATION</scope>
</reference>
<keyword id="KW-0002">3D-structure</keyword>
<keyword id="KW-1003">Cell membrane</keyword>
<keyword id="KW-0256">Endoplasmic reticulum</keyword>
<keyword id="KW-0472">Membrane</keyword>
<keyword id="KW-0539">Nucleus</keyword>
<keyword id="KW-1185">Reference proteome</keyword>
<keyword id="KW-0812">Transmembrane</keyword>
<keyword id="KW-1133">Transmembrane helix</keyword>